<comment type="function">
    <text evidence="1">Molecular chaperone. Has ATPase activity.</text>
</comment>
<comment type="subunit">
    <text evidence="1">Homodimer.</text>
</comment>
<comment type="subcellular location">
    <subcellularLocation>
        <location evidence="1">Cytoplasm</location>
    </subcellularLocation>
</comment>
<comment type="similarity">
    <text evidence="1">Belongs to the heat shock protein 90 family.</text>
</comment>
<name>HTPG_SULDN</name>
<organism>
    <name type="scientific">Sulfurimonas denitrificans (strain ATCC 33889 / DSM 1251)</name>
    <name type="common">Thiomicrospira denitrificans (strain ATCC 33889 / DSM 1251)</name>
    <dbReference type="NCBI Taxonomy" id="326298"/>
    <lineage>
        <taxon>Bacteria</taxon>
        <taxon>Pseudomonadati</taxon>
        <taxon>Campylobacterota</taxon>
        <taxon>Epsilonproteobacteria</taxon>
        <taxon>Campylobacterales</taxon>
        <taxon>Sulfurimonadaceae</taxon>
        <taxon>Sulfurimonas</taxon>
    </lineage>
</organism>
<keyword id="KW-0067">ATP-binding</keyword>
<keyword id="KW-0143">Chaperone</keyword>
<keyword id="KW-0963">Cytoplasm</keyword>
<keyword id="KW-0547">Nucleotide-binding</keyword>
<keyword id="KW-1185">Reference proteome</keyword>
<keyword id="KW-0346">Stress response</keyword>
<gene>
    <name evidence="1" type="primary">htpG</name>
    <name type="ordered locus">Suden_1264</name>
</gene>
<evidence type="ECO:0000255" key="1">
    <source>
        <dbReference type="HAMAP-Rule" id="MF_00505"/>
    </source>
</evidence>
<feature type="chain" id="PRO_0000237005" description="Chaperone protein HtpG">
    <location>
        <begin position="1"/>
        <end position="630"/>
    </location>
</feature>
<feature type="region of interest" description="A; substrate-binding" evidence="1">
    <location>
        <begin position="1"/>
        <end position="343"/>
    </location>
</feature>
<feature type="region of interest" description="B" evidence="1">
    <location>
        <begin position="344"/>
        <end position="554"/>
    </location>
</feature>
<feature type="region of interest" description="C" evidence="1">
    <location>
        <begin position="555"/>
        <end position="630"/>
    </location>
</feature>
<sequence>MAKHQFQTEANQILNLMIHSLYSNKEIFIRELVSNASDALDKLNMLVLTNDEYKGVNFSPRIDIIADKEAKTLTIKDSGIGMNEEDLMNNLGTIAKSGTKAFLENLSGDQKKDSHLIGQFGVGFYASFMVAHKVEVTTKKAATEQAYLWISKGDGEFEIEKTTRESHGTTIVMHLNDDESEFLDSYRIEGIIKKYSNHIPFAIFMDKDKFIPAKKDEDGKEIEPSRNEVENIQINRANALWTISKNEISDEEYKDFYSSIAHSSEEPLAWMHNKAEGAIEYTTLFYIPSKAPMDMYRVDYQTGIKLYINRVFITDDEKELMPTYLRFLRGVIDSKDLPLNVSREILQSNAVMAKIKNASVKKVLSELAKMAKRDAKKYDDFFTQFGNVLKEGLYSDYGNRENILELLKFNTINSDEKIMIEEFIKNVDETKKEIYYITGKTSLSMLKSSPALERFKSRGINVLVLNEEIDTIIFPMVTEYKEYKLIHVNDVKFEENENDKKAQEKSSKEFEGLTKELKESLGDSVKSVEVTFDLVDSPVKLKEDKEDPAFMMAQIMKQMGQSGDTPAPAPILQINPKHELIIKLKNSADINLINDAAHLLLDQAKLFDGVQLEDTAGFVLRLNRVIAKAI</sequence>
<protein>
    <recommendedName>
        <fullName evidence="1">Chaperone protein HtpG</fullName>
    </recommendedName>
    <alternativeName>
        <fullName evidence="1">Heat shock protein HtpG</fullName>
    </alternativeName>
    <alternativeName>
        <fullName evidence="1">High temperature protein G</fullName>
    </alternativeName>
</protein>
<accession>Q30R39</accession>
<reference key="1">
    <citation type="journal article" date="2008" name="Appl. Environ. Microbiol.">
        <title>Genome of the epsilonproteobacterial chemolithoautotroph Sulfurimonas denitrificans.</title>
        <authorList>
            <person name="Sievert S.M."/>
            <person name="Scott K.M."/>
            <person name="Klotz M.G."/>
            <person name="Chain P.S.G."/>
            <person name="Hauser L.J."/>
            <person name="Hemp J."/>
            <person name="Huegler M."/>
            <person name="Land M."/>
            <person name="Lapidus A."/>
            <person name="Larimer F.W."/>
            <person name="Lucas S."/>
            <person name="Malfatti S.A."/>
            <person name="Meyer F."/>
            <person name="Paulsen I.T."/>
            <person name="Ren Q."/>
            <person name="Simon J."/>
            <person name="Bailey K."/>
            <person name="Diaz E."/>
            <person name="Fitzpatrick K.A."/>
            <person name="Glover B."/>
            <person name="Gwatney N."/>
            <person name="Korajkic A."/>
            <person name="Long A."/>
            <person name="Mobberley J.M."/>
            <person name="Pantry S.N."/>
            <person name="Pazder G."/>
            <person name="Peterson S."/>
            <person name="Quintanilla J.D."/>
            <person name="Sprinkle R."/>
            <person name="Stephens J."/>
            <person name="Thomas P."/>
            <person name="Vaughn R."/>
            <person name="Weber M.J."/>
            <person name="Wooten L.L."/>
        </authorList>
    </citation>
    <scope>NUCLEOTIDE SEQUENCE [LARGE SCALE GENOMIC DNA]</scope>
    <source>
        <strain>ATCC 33889 / DSM 1251</strain>
    </source>
</reference>
<proteinExistence type="inferred from homology"/>
<dbReference type="EMBL" id="CP000153">
    <property type="protein sequence ID" value="ABB44542.1"/>
    <property type="molecule type" value="Genomic_DNA"/>
</dbReference>
<dbReference type="RefSeq" id="WP_011372894.1">
    <property type="nucleotide sequence ID" value="NC_007575.1"/>
</dbReference>
<dbReference type="SMR" id="Q30R39"/>
<dbReference type="STRING" id="326298.Suden_1264"/>
<dbReference type="KEGG" id="tdn:Suden_1264"/>
<dbReference type="eggNOG" id="COG0326">
    <property type="taxonomic scope" value="Bacteria"/>
</dbReference>
<dbReference type="HOGENOM" id="CLU_006684_3_0_7"/>
<dbReference type="OrthoDB" id="9802640at2"/>
<dbReference type="Proteomes" id="UP000002714">
    <property type="component" value="Chromosome"/>
</dbReference>
<dbReference type="GO" id="GO:0005737">
    <property type="term" value="C:cytoplasm"/>
    <property type="evidence" value="ECO:0007669"/>
    <property type="project" value="UniProtKB-SubCell"/>
</dbReference>
<dbReference type="GO" id="GO:0005524">
    <property type="term" value="F:ATP binding"/>
    <property type="evidence" value="ECO:0007669"/>
    <property type="project" value="UniProtKB-UniRule"/>
</dbReference>
<dbReference type="GO" id="GO:0016887">
    <property type="term" value="F:ATP hydrolysis activity"/>
    <property type="evidence" value="ECO:0007669"/>
    <property type="project" value="InterPro"/>
</dbReference>
<dbReference type="GO" id="GO:0140662">
    <property type="term" value="F:ATP-dependent protein folding chaperone"/>
    <property type="evidence" value="ECO:0007669"/>
    <property type="project" value="InterPro"/>
</dbReference>
<dbReference type="GO" id="GO:0051082">
    <property type="term" value="F:unfolded protein binding"/>
    <property type="evidence" value="ECO:0007669"/>
    <property type="project" value="UniProtKB-UniRule"/>
</dbReference>
<dbReference type="CDD" id="cd16927">
    <property type="entry name" value="HATPase_Hsp90-like"/>
    <property type="match status" value="1"/>
</dbReference>
<dbReference type="FunFam" id="3.30.230.80:FF:000002">
    <property type="entry name" value="Molecular chaperone HtpG"/>
    <property type="match status" value="1"/>
</dbReference>
<dbReference type="FunFam" id="3.30.565.10:FF:000009">
    <property type="entry name" value="Molecular chaperone HtpG"/>
    <property type="match status" value="1"/>
</dbReference>
<dbReference type="Gene3D" id="3.30.230.80">
    <property type="match status" value="1"/>
</dbReference>
<dbReference type="Gene3D" id="3.40.50.11260">
    <property type="match status" value="1"/>
</dbReference>
<dbReference type="Gene3D" id="1.20.120.790">
    <property type="entry name" value="Heat shock protein 90, C-terminal domain"/>
    <property type="match status" value="1"/>
</dbReference>
<dbReference type="Gene3D" id="3.30.565.10">
    <property type="entry name" value="Histidine kinase-like ATPase, C-terminal domain"/>
    <property type="match status" value="1"/>
</dbReference>
<dbReference type="HAMAP" id="MF_00505">
    <property type="entry name" value="HSP90"/>
    <property type="match status" value="1"/>
</dbReference>
<dbReference type="InterPro" id="IPR036890">
    <property type="entry name" value="HATPase_C_sf"/>
</dbReference>
<dbReference type="InterPro" id="IPR037196">
    <property type="entry name" value="HSP90_C"/>
</dbReference>
<dbReference type="InterPro" id="IPR001404">
    <property type="entry name" value="Hsp90_fam"/>
</dbReference>
<dbReference type="InterPro" id="IPR020575">
    <property type="entry name" value="Hsp90_N"/>
</dbReference>
<dbReference type="InterPro" id="IPR020568">
    <property type="entry name" value="Ribosomal_Su5_D2-typ_SF"/>
</dbReference>
<dbReference type="NCBIfam" id="NF003555">
    <property type="entry name" value="PRK05218.1"/>
    <property type="match status" value="1"/>
</dbReference>
<dbReference type="PANTHER" id="PTHR11528">
    <property type="entry name" value="HEAT SHOCK PROTEIN 90 FAMILY MEMBER"/>
    <property type="match status" value="1"/>
</dbReference>
<dbReference type="Pfam" id="PF13589">
    <property type="entry name" value="HATPase_c_3"/>
    <property type="match status" value="1"/>
</dbReference>
<dbReference type="Pfam" id="PF00183">
    <property type="entry name" value="HSP90"/>
    <property type="match status" value="1"/>
</dbReference>
<dbReference type="PIRSF" id="PIRSF002583">
    <property type="entry name" value="Hsp90"/>
    <property type="match status" value="1"/>
</dbReference>
<dbReference type="PRINTS" id="PR00775">
    <property type="entry name" value="HEATSHOCK90"/>
</dbReference>
<dbReference type="SMART" id="SM00387">
    <property type="entry name" value="HATPase_c"/>
    <property type="match status" value="1"/>
</dbReference>
<dbReference type="SUPFAM" id="SSF55874">
    <property type="entry name" value="ATPase domain of HSP90 chaperone/DNA topoisomerase II/histidine kinase"/>
    <property type="match status" value="1"/>
</dbReference>
<dbReference type="SUPFAM" id="SSF110942">
    <property type="entry name" value="HSP90 C-terminal domain"/>
    <property type="match status" value="1"/>
</dbReference>
<dbReference type="SUPFAM" id="SSF54211">
    <property type="entry name" value="Ribosomal protein S5 domain 2-like"/>
    <property type="match status" value="1"/>
</dbReference>